<accession>Q2YA99</accession>
<keyword id="KW-0997">Cell inner membrane</keyword>
<keyword id="KW-1003">Cell membrane</keyword>
<keyword id="KW-0472">Membrane</keyword>
<keyword id="KW-0520">NAD</keyword>
<keyword id="KW-0874">Quinone</keyword>
<keyword id="KW-1185">Reference proteome</keyword>
<keyword id="KW-1278">Translocase</keyword>
<keyword id="KW-0812">Transmembrane</keyword>
<keyword id="KW-1133">Transmembrane helix</keyword>
<keyword id="KW-0830">Ubiquinone</keyword>
<name>NUOH1_NITMU</name>
<reference key="1">
    <citation type="submission" date="2005-08" db="EMBL/GenBank/DDBJ databases">
        <title>Complete sequence of chromosome 1 of Nitrosospira multiformis ATCC 25196.</title>
        <authorList>
            <person name="Copeland A."/>
            <person name="Lucas S."/>
            <person name="Lapidus A."/>
            <person name="Barry K."/>
            <person name="Detter J.C."/>
            <person name="Glavina T."/>
            <person name="Hammon N."/>
            <person name="Israni S."/>
            <person name="Pitluck S."/>
            <person name="Chain P."/>
            <person name="Malfatti S."/>
            <person name="Shin M."/>
            <person name="Vergez L."/>
            <person name="Schmutz J."/>
            <person name="Larimer F."/>
            <person name="Land M."/>
            <person name="Hauser L."/>
            <person name="Kyrpides N."/>
            <person name="Lykidis A."/>
            <person name="Richardson P."/>
        </authorList>
    </citation>
    <scope>NUCLEOTIDE SEQUENCE [LARGE SCALE GENOMIC DNA]</scope>
    <source>
        <strain>ATCC 25196 / NCIMB 11849 / C 71</strain>
    </source>
</reference>
<proteinExistence type="inferred from homology"/>
<evidence type="ECO:0000255" key="1">
    <source>
        <dbReference type="HAMAP-Rule" id="MF_01350"/>
    </source>
</evidence>
<comment type="function">
    <text evidence="1">NDH-1 shuttles electrons from NADH, via FMN and iron-sulfur (Fe-S) centers, to quinones in the respiratory chain. The immediate electron acceptor for the enzyme in this species is believed to be ubiquinone. Couples the redox reaction to proton translocation (for every two electrons transferred, four hydrogen ions are translocated across the cytoplasmic membrane), and thus conserves the redox energy in a proton gradient. This subunit may bind ubiquinone.</text>
</comment>
<comment type="catalytic activity">
    <reaction evidence="1">
        <text>a quinone + NADH + 5 H(+)(in) = a quinol + NAD(+) + 4 H(+)(out)</text>
        <dbReference type="Rhea" id="RHEA:57888"/>
        <dbReference type="ChEBI" id="CHEBI:15378"/>
        <dbReference type="ChEBI" id="CHEBI:24646"/>
        <dbReference type="ChEBI" id="CHEBI:57540"/>
        <dbReference type="ChEBI" id="CHEBI:57945"/>
        <dbReference type="ChEBI" id="CHEBI:132124"/>
    </reaction>
</comment>
<comment type="subunit">
    <text evidence="1">NDH-1 is composed of 14 different subunits. Subunits NuoA, H, J, K, L, M, N constitute the membrane sector of the complex.</text>
</comment>
<comment type="subcellular location">
    <subcellularLocation>
        <location evidence="1">Cell inner membrane</location>
        <topology evidence="1">Multi-pass membrane protein</topology>
    </subcellularLocation>
</comment>
<comment type="similarity">
    <text evidence="1">Belongs to the complex I subunit 1 family.</text>
</comment>
<sequence>MNEWTPIWVNLILILAVLFAFAAMLSWIERRLLGLWQDRYGPNRVGPFGVLQIVADSIKLLTKEDWIPPFADRAVFVLAPAIVAVTTLLAFAVVPIAPGIGVVDLNIGVLFFLAMSSLGVYSIVLGGWASNSKYPLLGGLRAAAQMLSYEVFMGLALMGVVMLAGSFNLRDIVAAQENLWFCIPQILGLATFAVAGIAEARRLPFDLPESENELVAGFHTEYSSMKFGLFFIGEYVGITLISAMIVTLFFGGWLGPVLPPLAWFLLKTFIVIICFVLLRAALPRPRYDQLMTYGWKVMLPVTLVNLLLTGAVVLSVA</sequence>
<organism>
    <name type="scientific">Nitrosospira multiformis (strain ATCC 25196 / NCIMB 11849 / C 71)</name>
    <dbReference type="NCBI Taxonomy" id="323848"/>
    <lineage>
        <taxon>Bacteria</taxon>
        <taxon>Pseudomonadati</taxon>
        <taxon>Pseudomonadota</taxon>
        <taxon>Betaproteobacteria</taxon>
        <taxon>Nitrosomonadales</taxon>
        <taxon>Nitrosomonadaceae</taxon>
        <taxon>Nitrosospira</taxon>
    </lineage>
</organism>
<dbReference type="EC" id="7.1.1.-" evidence="1"/>
<dbReference type="EMBL" id="CP000103">
    <property type="protein sequence ID" value="ABB74322.1"/>
    <property type="molecule type" value="Genomic_DNA"/>
</dbReference>
<dbReference type="RefSeq" id="WP_011380367.1">
    <property type="nucleotide sequence ID" value="NC_007614.1"/>
</dbReference>
<dbReference type="SMR" id="Q2YA99"/>
<dbReference type="STRING" id="323848.Nmul_A1019"/>
<dbReference type="KEGG" id="nmu:Nmul_A1019"/>
<dbReference type="eggNOG" id="COG1005">
    <property type="taxonomic scope" value="Bacteria"/>
</dbReference>
<dbReference type="HOGENOM" id="CLU_015134_0_1_4"/>
<dbReference type="OrthoDB" id="9803734at2"/>
<dbReference type="Proteomes" id="UP000002718">
    <property type="component" value="Chromosome"/>
</dbReference>
<dbReference type="GO" id="GO:0005886">
    <property type="term" value="C:plasma membrane"/>
    <property type="evidence" value="ECO:0007669"/>
    <property type="project" value="UniProtKB-SubCell"/>
</dbReference>
<dbReference type="GO" id="GO:0003954">
    <property type="term" value="F:NADH dehydrogenase activity"/>
    <property type="evidence" value="ECO:0007669"/>
    <property type="project" value="TreeGrafter"/>
</dbReference>
<dbReference type="GO" id="GO:0016655">
    <property type="term" value="F:oxidoreductase activity, acting on NAD(P)H, quinone or similar compound as acceptor"/>
    <property type="evidence" value="ECO:0007669"/>
    <property type="project" value="UniProtKB-UniRule"/>
</dbReference>
<dbReference type="GO" id="GO:0048038">
    <property type="term" value="F:quinone binding"/>
    <property type="evidence" value="ECO:0007669"/>
    <property type="project" value="UniProtKB-KW"/>
</dbReference>
<dbReference type="GO" id="GO:0009060">
    <property type="term" value="P:aerobic respiration"/>
    <property type="evidence" value="ECO:0007669"/>
    <property type="project" value="TreeGrafter"/>
</dbReference>
<dbReference type="HAMAP" id="MF_01350">
    <property type="entry name" value="NDH1_NuoH"/>
    <property type="match status" value="1"/>
</dbReference>
<dbReference type="InterPro" id="IPR001694">
    <property type="entry name" value="NADH_UbQ_OxRdtase_su1/FPO"/>
</dbReference>
<dbReference type="InterPro" id="IPR018086">
    <property type="entry name" value="NADH_UbQ_OxRdtase_su1_CS"/>
</dbReference>
<dbReference type="NCBIfam" id="NF004740">
    <property type="entry name" value="PRK06076.1-1"/>
    <property type="match status" value="1"/>
</dbReference>
<dbReference type="NCBIfam" id="NF004741">
    <property type="entry name" value="PRK06076.1-2"/>
    <property type="match status" value="1"/>
</dbReference>
<dbReference type="PANTHER" id="PTHR11432">
    <property type="entry name" value="NADH DEHYDROGENASE SUBUNIT 1"/>
    <property type="match status" value="1"/>
</dbReference>
<dbReference type="PANTHER" id="PTHR11432:SF3">
    <property type="entry name" value="NADH-UBIQUINONE OXIDOREDUCTASE CHAIN 1"/>
    <property type="match status" value="1"/>
</dbReference>
<dbReference type="Pfam" id="PF00146">
    <property type="entry name" value="NADHdh"/>
    <property type="match status" value="1"/>
</dbReference>
<dbReference type="PROSITE" id="PS00668">
    <property type="entry name" value="COMPLEX1_ND1_2"/>
    <property type="match status" value="1"/>
</dbReference>
<feature type="chain" id="PRO_0000244926" description="NADH-quinone oxidoreductase subunit H 1">
    <location>
        <begin position="1"/>
        <end position="317"/>
    </location>
</feature>
<feature type="transmembrane region" description="Helical" evidence="1">
    <location>
        <begin position="7"/>
        <end position="27"/>
    </location>
</feature>
<feature type="transmembrane region" description="Helical" evidence="1">
    <location>
        <begin position="74"/>
        <end position="94"/>
    </location>
</feature>
<feature type="transmembrane region" description="Helical" evidence="1">
    <location>
        <begin position="107"/>
        <end position="127"/>
    </location>
</feature>
<feature type="transmembrane region" description="Helical" evidence="1">
    <location>
        <begin position="147"/>
        <end position="167"/>
    </location>
</feature>
<feature type="transmembrane region" description="Helical" evidence="1">
    <location>
        <begin position="179"/>
        <end position="199"/>
    </location>
</feature>
<feature type="transmembrane region" description="Helical" evidence="1">
    <location>
        <begin position="230"/>
        <end position="250"/>
    </location>
</feature>
<feature type="transmembrane region" description="Helical" evidence="1">
    <location>
        <begin position="257"/>
        <end position="277"/>
    </location>
</feature>
<feature type="transmembrane region" description="Helical" evidence="1">
    <location>
        <begin position="297"/>
        <end position="317"/>
    </location>
</feature>
<gene>
    <name evidence="1" type="primary">nuoH1</name>
    <name type="ordered locus">Nmul_A1019</name>
</gene>
<protein>
    <recommendedName>
        <fullName evidence="1">NADH-quinone oxidoreductase subunit H 1</fullName>
        <ecNumber evidence="1">7.1.1.-</ecNumber>
    </recommendedName>
    <alternativeName>
        <fullName evidence="1">NADH dehydrogenase I subunit H 1</fullName>
    </alternativeName>
    <alternativeName>
        <fullName evidence="1">NDH-1 subunit H 1</fullName>
    </alternativeName>
</protein>